<accession>Q5PM78</accession>
<reference key="1">
    <citation type="journal article" date="2004" name="Nat. Genet.">
        <title>Comparison of genome degradation in Paratyphi A and Typhi, human-restricted serovars of Salmonella enterica that cause typhoid.</title>
        <authorList>
            <person name="McClelland M."/>
            <person name="Sanderson K.E."/>
            <person name="Clifton S.W."/>
            <person name="Latreille P."/>
            <person name="Porwollik S."/>
            <person name="Sabo A."/>
            <person name="Meyer R."/>
            <person name="Bieri T."/>
            <person name="Ozersky P."/>
            <person name="McLellan M."/>
            <person name="Harkins C.R."/>
            <person name="Wang C."/>
            <person name="Nguyen C."/>
            <person name="Berghoff A."/>
            <person name="Elliott G."/>
            <person name="Kohlberg S."/>
            <person name="Strong C."/>
            <person name="Du F."/>
            <person name="Carter J."/>
            <person name="Kremizki C."/>
            <person name="Layman D."/>
            <person name="Leonard S."/>
            <person name="Sun H."/>
            <person name="Fulton L."/>
            <person name="Nash W."/>
            <person name="Miner T."/>
            <person name="Minx P."/>
            <person name="Delehaunty K."/>
            <person name="Fronick C."/>
            <person name="Magrini V."/>
            <person name="Nhan M."/>
            <person name="Warren W."/>
            <person name="Florea L."/>
            <person name="Spieth J."/>
            <person name="Wilson R.K."/>
        </authorList>
    </citation>
    <scope>NUCLEOTIDE SEQUENCE [LARGE SCALE GENOMIC DNA]</scope>
    <source>
        <strain>ATCC 9150 / SARB42</strain>
    </source>
</reference>
<sequence length="311" mass="33744">MALPIIIDCDPGHDDAIALVLALASPELEVKAITSSAGNQTPEKTLRNVLRMLTLLKRPDIPVAGGAVKPLMRELIIADNVHGESGLDGPALPEPSFAPQSGTAVELMAKTLRESSQPVTIVSTGPQTNVALLLNSHPELHAKIARIVIMGGAMGLGNWTPAAEFNIYVDPEAAEIVFQSGIPVVMAGLNVTHKAQIHAADIERFRAIGNPISTIVAELLDFFMEYHKDEKWGFVGAPLHDPCTIAWLLKPEIFTTVERWVGVETQGKYTQGMTVVDYYFLTGNKPNATVMVDVDRQGFVDLLAERLQYYA</sequence>
<keyword id="KW-0326">Glycosidase</keyword>
<keyword id="KW-0378">Hydrolase</keyword>
<comment type="function">
    <text evidence="1">Hydrolyzes cytidine or uridine to ribose and cytosine or uracil, respectively.</text>
</comment>
<comment type="similarity">
    <text evidence="1">Belongs to the IUNH family. RihA subfamily.</text>
</comment>
<evidence type="ECO:0000255" key="1">
    <source>
        <dbReference type="HAMAP-Rule" id="MF_01431"/>
    </source>
</evidence>
<feature type="chain" id="PRO_0000206818" description="Pyrimidine-specific ribonucleoside hydrolase RihA">
    <location>
        <begin position="1"/>
        <end position="311"/>
    </location>
</feature>
<feature type="active site" evidence="1">
    <location>
        <position position="240"/>
    </location>
</feature>
<name>RIHA_SALPA</name>
<protein>
    <recommendedName>
        <fullName evidence="1">Pyrimidine-specific ribonucleoside hydrolase RihA</fullName>
        <ecNumber evidence="1">3.2.-.-</ecNumber>
    </recommendedName>
    <alternativeName>
        <fullName evidence="1">Cytidine/uridine-specific hydrolase</fullName>
    </alternativeName>
</protein>
<proteinExistence type="inferred from homology"/>
<dbReference type="EC" id="3.2.-.-" evidence="1"/>
<dbReference type="EMBL" id="CP000026">
    <property type="protein sequence ID" value="AAV77973.1"/>
    <property type="molecule type" value="Genomic_DNA"/>
</dbReference>
<dbReference type="RefSeq" id="WP_001207427.1">
    <property type="nucleotide sequence ID" value="NC_006511.1"/>
</dbReference>
<dbReference type="SMR" id="Q5PM78"/>
<dbReference type="KEGG" id="spt:SPA2079"/>
<dbReference type="HOGENOM" id="CLU_036838_2_0_6"/>
<dbReference type="Proteomes" id="UP000008185">
    <property type="component" value="Chromosome"/>
</dbReference>
<dbReference type="GO" id="GO:0005829">
    <property type="term" value="C:cytosol"/>
    <property type="evidence" value="ECO:0007669"/>
    <property type="project" value="TreeGrafter"/>
</dbReference>
<dbReference type="GO" id="GO:0008477">
    <property type="term" value="F:purine nucleosidase activity"/>
    <property type="evidence" value="ECO:0007669"/>
    <property type="project" value="TreeGrafter"/>
</dbReference>
<dbReference type="GO" id="GO:0045437">
    <property type="term" value="F:uridine nucleosidase activity"/>
    <property type="evidence" value="ECO:0007669"/>
    <property type="project" value="InterPro"/>
</dbReference>
<dbReference type="GO" id="GO:0015949">
    <property type="term" value="P:nucleobase-containing small molecule interconversion"/>
    <property type="evidence" value="ECO:0007669"/>
    <property type="project" value="InterPro"/>
</dbReference>
<dbReference type="GO" id="GO:0006152">
    <property type="term" value="P:purine nucleoside catabolic process"/>
    <property type="evidence" value="ECO:0007669"/>
    <property type="project" value="TreeGrafter"/>
</dbReference>
<dbReference type="GO" id="GO:0006206">
    <property type="term" value="P:pyrimidine nucleobase metabolic process"/>
    <property type="evidence" value="ECO:0007669"/>
    <property type="project" value="UniProtKB-UniRule"/>
</dbReference>
<dbReference type="CDD" id="cd02651">
    <property type="entry name" value="nuc_hydro_IU_UC_XIUA"/>
    <property type="match status" value="1"/>
</dbReference>
<dbReference type="FunFam" id="3.90.245.10:FF:000001">
    <property type="entry name" value="Pyrimidine-specific ribonucleoside hydrolase RihA"/>
    <property type="match status" value="1"/>
</dbReference>
<dbReference type="Gene3D" id="3.90.245.10">
    <property type="entry name" value="Ribonucleoside hydrolase-like"/>
    <property type="match status" value="1"/>
</dbReference>
<dbReference type="HAMAP" id="MF_01431">
    <property type="entry name" value="Pyrim_hydro_RihA"/>
    <property type="match status" value="1"/>
</dbReference>
<dbReference type="InterPro" id="IPR015910">
    <property type="entry name" value="I/U_nuclsd_hydro_CS"/>
</dbReference>
<dbReference type="InterPro" id="IPR001910">
    <property type="entry name" value="Inosine/uridine_hydrolase_dom"/>
</dbReference>
<dbReference type="InterPro" id="IPR023186">
    <property type="entry name" value="IUNH"/>
</dbReference>
<dbReference type="InterPro" id="IPR022975">
    <property type="entry name" value="Pyrim_hydro_RihA"/>
</dbReference>
<dbReference type="InterPro" id="IPR036452">
    <property type="entry name" value="Ribo_hydro-like"/>
</dbReference>
<dbReference type="NCBIfam" id="NF007761">
    <property type="entry name" value="PRK10443.1"/>
    <property type="match status" value="1"/>
</dbReference>
<dbReference type="PANTHER" id="PTHR12304">
    <property type="entry name" value="INOSINE-URIDINE PREFERRING NUCLEOSIDE HYDROLASE"/>
    <property type="match status" value="1"/>
</dbReference>
<dbReference type="PANTHER" id="PTHR12304:SF4">
    <property type="entry name" value="URIDINE NUCLEOSIDASE"/>
    <property type="match status" value="1"/>
</dbReference>
<dbReference type="Pfam" id="PF01156">
    <property type="entry name" value="IU_nuc_hydro"/>
    <property type="match status" value="1"/>
</dbReference>
<dbReference type="SUPFAM" id="SSF53590">
    <property type="entry name" value="Nucleoside hydrolase"/>
    <property type="match status" value="1"/>
</dbReference>
<dbReference type="PROSITE" id="PS01247">
    <property type="entry name" value="IUNH"/>
    <property type="match status" value="1"/>
</dbReference>
<gene>
    <name evidence="1" type="primary">rihA</name>
    <name type="ordered locus">SPA2079</name>
</gene>
<organism>
    <name type="scientific">Salmonella paratyphi A (strain ATCC 9150 / SARB42)</name>
    <dbReference type="NCBI Taxonomy" id="295319"/>
    <lineage>
        <taxon>Bacteria</taxon>
        <taxon>Pseudomonadati</taxon>
        <taxon>Pseudomonadota</taxon>
        <taxon>Gammaproteobacteria</taxon>
        <taxon>Enterobacterales</taxon>
        <taxon>Enterobacteriaceae</taxon>
        <taxon>Salmonella</taxon>
    </lineage>
</organism>